<evidence type="ECO:0000255" key="1">
    <source>
        <dbReference type="HAMAP-Rule" id="MF_00387"/>
    </source>
</evidence>
<protein>
    <recommendedName>
        <fullName evidence="1">Acyl-[acyl-carrier-protein]--UDP-N-acetylglucosamine O-acyltransferase</fullName>
        <shortName evidence="1">UDP-N-acetylglucosamine acyltransferase</shortName>
        <ecNumber evidence="1">2.3.1.129</ecNumber>
    </recommendedName>
</protein>
<sequence length="280" mass="30751">MTNIHPTAIVEDGARIGNNVTIEPYAIVKKNVTLCDDVVVKSYAYIDGFTTIGRGTTVWPSAMIGNKPQDLKFKGEKTFVEIGEHCEIREFAMITSSTFEGTTVSIGNNCLIMPWAHIAHNCSVGNNVVFSTHVQLAGHVQVGDCVTIGSMVGVHQFVRIGSYSMVGAMSGIRRDIPPFTIGTGNPYALGGINKVGLQRRQVSFETRLALIKTFKRVFRSDESFQASLESVLEDFGEVPEVRHFVEFCRQPSKRGIERGVDCEASLEEPIDKKEGAFVES</sequence>
<comment type="function">
    <text evidence="1">Involved in the biosynthesis of lipid A, a phosphorylated glycolipid that anchors the lipopolysaccharide to the outer membrane of the cell.</text>
</comment>
<comment type="catalytic activity">
    <reaction evidence="1">
        <text>a (3R)-hydroxyacyl-[ACP] + UDP-N-acetyl-alpha-D-glucosamine = a UDP-3-O-[(3R)-3-hydroxyacyl]-N-acetyl-alpha-D-glucosamine + holo-[ACP]</text>
        <dbReference type="Rhea" id="RHEA:67812"/>
        <dbReference type="Rhea" id="RHEA-COMP:9685"/>
        <dbReference type="Rhea" id="RHEA-COMP:9945"/>
        <dbReference type="ChEBI" id="CHEBI:57705"/>
        <dbReference type="ChEBI" id="CHEBI:64479"/>
        <dbReference type="ChEBI" id="CHEBI:78827"/>
        <dbReference type="ChEBI" id="CHEBI:173225"/>
        <dbReference type="EC" id="2.3.1.129"/>
    </reaction>
</comment>
<comment type="pathway">
    <text evidence="1">Glycolipid biosynthesis; lipid IV(A) biosynthesis; lipid IV(A) from (3R)-3-hydroxytetradecanoyl-[acyl-carrier-protein] and UDP-N-acetyl-alpha-D-glucosamine: step 1/6.</text>
</comment>
<comment type="subunit">
    <text evidence="1">Homotrimer.</text>
</comment>
<comment type="subcellular location">
    <subcellularLocation>
        <location evidence="1">Cytoplasm</location>
    </subcellularLocation>
</comment>
<comment type="similarity">
    <text evidence="1">Belongs to the transferase hexapeptide repeat family. LpxA subfamily.</text>
</comment>
<feature type="chain" id="PRO_0000302568" description="Acyl-[acyl-carrier-protein]--UDP-N-acetylglucosamine O-acyltransferase">
    <location>
        <begin position="1"/>
        <end position="280"/>
    </location>
</feature>
<proteinExistence type="inferred from homology"/>
<accession>Q3KLG6</accession>
<gene>
    <name evidence="1" type="primary">lpxA</name>
    <name type="ordered locus">CTA_0580</name>
</gene>
<organism>
    <name type="scientific">Chlamydia trachomatis serovar A (strain ATCC VR-571B / DSM 19440 / HAR-13)</name>
    <dbReference type="NCBI Taxonomy" id="315277"/>
    <lineage>
        <taxon>Bacteria</taxon>
        <taxon>Pseudomonadati</taxon>
        <taxon>Chlamydiota</taxon>
        <taxon>Chlamydiia</taxon>
        <taxon>Chlamydiales</taxon>
        <taxon>Chlamydiaceae</taxon>
        <taxon>Chlamydia/Chlamydophila group</taxon>
        <taxon>Chlamydia</taxon>
    </lineage>
</organism>
<keyword id="KW-0012">Acyltransferase</keyword>
<keyword id="KW-0963">Cytoplasm</keyword>
<keyword id="KW-0441">Lipid A biosynthesis</keyword>
<keyword id="KW-0444">Lipid biosynthesis</keyword>
<keyword id="KW-0443">Lipid metabolism</keyword>
<keyword id="KW-0677">Repeat</keyword>
<keyword id="KW-0808">Transferase</keyword>
<dbReference type="EC" id="2.3.1.129" evidence="1"/>
<dbReference type="EMBL" id="CP000051">
    <property type="protein sequence ID" value="AAX50806.1"/>
    <property type="molecule type" value="Genomic_DNA"/>
</dbReference>
<dbReference type="RefSeq" id="WP_009872289.1">
    <property type="nucleotide sequence ID" value="NC_007429.1"/>
</dbReference>
<dbReference type="SMR" id="Q3KLG6"/>
<dbReference type="KEGG" id="cta:CTA_0580"/>
<dbReference type="HOGENOM" id="CLU_061249_0_0_0"/>
<dbReference type="UniPathway" id="UPA00359">
    <property type="reaction ID" value="UER00477"/>
</dbReference>
<dbReference type="Proteomes" id="UP000002532">
    <property type="component" value="Chromosome"/>
</dbReference>
<dbReference type="GO" id="GO:0005737">
    <property type="term" value="C:cytoplasm"/>
    <property type="evidence" value="ECO:0007669"/>
    <property type="project" value="UniProtKB-SubCell"/>
</dbReference>
<dbReference type="GO" id="GO:0016020">
    <property type="term" value="C:membrane"/>
    <property type="evidence" value="ECO:0007669"/>
    <property type="project" value="GOC"/>
</dbReference>
<dbReference type="GO" id="GO:0008780">
    <property type="term" value="F:acyl-[acyl-carrier-protein]-UDP-N-acetylglucosamine O-acyltransferase activity"/>
    <property type="evidence" value="ECO:0007669"/>
    <property type="project" value="UniProtKB-UniRule"/>
</dbReference>
<dbReference type="GO" id="GO:0009245">
    <property type="term" value="P:lipid A biosynthetic process"/>
    <property type="evidence" value="ECO:0007669"/>
    <property type="project" value="UniProtKB-UniRule"/>
</dbReference>
<dbReference type="CDD" id="cd03351">
    <property type="entry name" value="LbH_UDP-GlcNAc_AT"/>
    <property type="match status" value="1"/>
</dbReference>
<dbReference type="Gene3D" id="2.160.10.10">
    <property type="entry name" value="Hexapeptide repeat proteins"/>
    <property type="match status" value="1"/>
</dbReference>
<dbReference type="Gene3D" id="1.20.1180.10">
    <property type="entry name" value="Udp N-acetylglucosamine O-acyltransferase, C-terminal domain"/>
    <property type="match status" value="1"/>
</dbReference>
<dbReference type="HAMAP" id="MF_00387">
    <property type="entry name" value="LpxA"/>
    <property type="match status" value="1"/>
</dbReference>
<dbReference type="InterPro" id="IPR029098">
    <property type="entry name" value="Acetyltransf_C"/>
</dbReference>
<dbReference type="InterPro" id="IPR037157">
    <property type="entry name" value="Acetyltransf_C_sf"/>
</dbReference>
<dbReference type="InterPro" id="IPR001451">
    <property type="entry name" value="Hexapep"/>
</dbReference>
<dbReference type="InterPro" id="IPR018357">
    <property type="entry name" value="Hexapep_transf_CS"/>
</dbReference>
<dbReference type="InterPro" id="IPR010137">
    <property type="entry name" value="Lipid_A_LpxA"/>
</dbReference>
<dbReference type="InterPro" id="IPR011004">
    <property type="entry name" value="Trimer_LpxA-like_sf"/>
</dbReference>
<dbReference type="NCBIfam" id="TIGR01852">
    <property type="entry name" value="lipid_A_lpxA"/>
    <property type="match status" value="1"/>
</dbReference>
<dbReference type="NCBIfam" id="NF003657">
    <property type="entry name" value="PRK05289.1"/>
    <property type="match status" value="1"/>
</dbReference>
<dbReference type="PANTHER" id="PTHR43480">
    <property type="entry name" value="ACYL-[ACYL-CARRIER-PROTEIN]--UDP-N-ACETYLGLUCOSAMINE O-ACYLTRANSFERASE"/>
    <property type="match status" value="1"/>
</dbReference>
<dbReference type="PANTHER" id="PTHR43480:SF1">
    <property type="entry name" value="ACYL-[ACYL-CARRIER-PROTEIN]--UDP-N-ACETYLGLUCOSAMINE O-ACYLTRANSFERASE, MITOCHONDRIAL-RELATED"/>
    <property type="match status" value="1"/>
</dbReference>
<dbReference type="Pfam" id="PF13720">
    <property type="entry name" value="Acetyltransf_11"/>
    <property type="match status" value="1"/>
</dbReference>
<dbReference type="Pfam" id="PF00132">
    <property type="entry name" value="Hexapep"/>
    <property type="match status" value="1"/>
</dbReference>
<dbReference type="PIRSF" id="PIRSF000456">
    <property type="entry name" value="UDP-GlcNAc_acltr"/>
    <property type="match status" value="1"/>
</dbReference>
<dbReference type="SUPFAM" id="SSF51161">
    <property type="entry name" value="Trimeric LpxA-like enzymes"/>
    <property type="match status" value="1"/>
</dbReference>
<dbReference type="PROSITE" id="PS00101">
    <property type="entry name" value="HEXAPEP_TRANSFERASES"/>
    <property type="match status" value="1"/>
</dbReference>
<reference key="1">
    <citation type="journal article" date="2005" name="Infect. Immun.">
        <title>Comparative genomic analysis of Chlamydia trachomatis oculotropic and genitotropic strains.</title>
        <authorList>
            <person name="Carlson J.H."/>
            <person name="Porcella S.F."/>
            <person name="McClarty G."/>
            <person name="Caldwell H.D."/>
        </authorList>
    </citation>
    <scope>NUCLEOTIDE SEQUENCE [LARGE SCALE GENOMIC DNA]</scope>
    <source>
        <strain>ATCC VR-571B / DSM 19440 / HAR-13</strain>
    </source>
</reference>
<name>LPXA_CHLTA</name>